<reference key="1">
    <citation type="submission" date="2009-04" db="EMBL/GenBank/DDBJ databases">
        <title>Genome sequence of Bacillus anthracis A0248.</title>
        <authorList>
            <person name="Dodson R.J."/>
            <person name="Munk A.C."/>
            <person name="Bruce D."/>
            <person name="Detter C."/>
            <person name="Tapia R."/>
            <person name="Sutton G."/>
            <person name="Sims D."/>
            <person name="Brettin T."/>
        </authorList>
    </citation>
    <scope>NUCLEOTIDE SEQUENCE [LARGE SCALE GENOMIC DNA]</scope>
    <source>
        <strain>A0248</strain>
    </source>
</reference>
<feature type="chain" id="PRO_1000132532" description="Imidazole glycerol phosphate synthase subunit HisH">
    <location>
        <begin position="1"/>
        <end position="209"/>
    </location>
</feature>
<feature type="domain" description="Glutamine amidotransferase type-1" evidence="1">
    <location>
        <begin position="1"/>
        <end position="205"/>
    </location>
</feature>
<feature type="active site" description="Nucleophile" evidence="1">
    <location>
        <position position="79"/>
    </location>
</feature>
<feature type="active site" evidence="1">
    <location>
        <position position="180"/>
    </location>
</feature>
<feature type="active site" evidence="1">
    <location>
        <position position="182"/>
    </location>
</feature>
<dbReference type="EC" id="4.3.2.10" evidence="1"/>
<dbReference type="EC" id="3.5.1.2" evidence="1"/>
<dbReference type="EMBL" id="CP001598">
    <property type="protein sequence ID" value="ACQ47091.1"/>
    <property type="molecule type" value="Genomic_DNA"/>
</dbReference>
<dbReference type="RefSeq" id="WP_000560343.1">
    <property type="nucleotide sequence ID" value="NC_012659.1"/>
</dbReference>
<dbReference type="SMR" id="C3P504"/>
<dbReference type="GeneID" id="45021407"/>
<dbReference type="KEGG" id="bai:BAA_1495"/>
<dbReference type="HOGENOM" id="CLU_071837_2_2_9"/>
<dbReference type="UniPathway" id="UPA00031">
    <property type="reaction ID" value="UER00010"/>
</dbReference>
<dbReference type="GO" id="GO:0005737">
    <property type="term" value="C:cytoplasm"/>
    <property type="evidence" value="ECO:0007669"/>
    <property type="project" value="UniProtKB-SubCell"/>
</dbReference>
<dbReference type="GO" id="GO:0004359">
    <property type="term" value="F:glutaminase activity"/>
    <property type="evidence" value="ECO:0007669"/>
    <property type="project" value="UniProtKB-EC"/>
</dbReference>
<dbReference type="GO" id="GO:0000107">
    <property type="term" value="F:imidazoleglycerol-phosphate synthase activity"/>
    <property type="evidence" value="ECO:0007669"/>
    <property type="project" value="UniProtKB-UniRule"/>
</dbReference>
<dbReference type="GO" id="GO:0016829">
    <property type="term" value="F:lyase activity"/>
    <property type="evidence" value="ECO:0007669"/>
    <property type="project" value="UniProtKB-KW"/>
</dbReference>
<dbReference type="GO" id="GO:0000105">
    <property type="term" value="P:L-histidine biosynthetic process"/>
    <property type="evidence" value="ECO:0007669"/>
    <property type="project" value="UniProtKB-UniRule"/>
</dbReference>
<dbReference type="CDD" id="cd01748">
    <property type="entry name" value="GATase1_IGP_Synthase"/>
    <property type="match status" value="1"/>
</dbReference>
<dbReference type="FunFam" id="3.40.50.880:FF:000028">
    <property type="entry name" value="Imidazole glycerol phosphate synthase subunit HisH"/>
    <property type="match status" value="1"/>
</dbReference>
<dbReference type="Gene3D" id="3.40.50.880">
    <property type="match status" value="1"/>
</dbReference>
<dbReference type="HAMAP" id="MF_00278">
    <property type="entry name" value="HisH"/>
    <property type="match status" value="1"/>
</dbReference>
<dbReference type="InterPro" id="IPR029062">
    <property type="entry name" value="Class_I_gatase-like"/>
</dbReference>
<dbReference type="InterPro" id="IPR017926">
    <property type="entry name" value="GATASE"/>
</dbReference>
<dbReference type="InterPro" id="IPR010139">
    <property type="entry name" value="Imidazole-glycPsynth_HisH"/>
</dbReference>
<dbReference type="NCBIfam" id="TIGR01855">
    <property type="entry name" value="IMP_synth_hisH"/>
    <property type="match status" value="1"/>
</dbReference>
<dbReference type="PANTHER" id="PTHR42701">
    <property type="entry name" value="IMIDAZOLE GLYCEROL PHOSPHATE SYNTHASE SUBUNIT HISH"/>
    <property type="match status" value="1"/>
</dbReference>
<dbReference type="PANTHER" id="PTHR42701:SF1">
    <property type="entry name" value="IMIDAZOLE GLYCEROL PHOSPHATE SYNTHASE SUBUNIT HISH"/>
    <property type="match status" value="1"/>
</dbReference>
<dbReference type="Pfam" id="PF00117">
    <property type="entry name" value="GATase"/>
    <property type="match status" value="1"/>
</dbReference>
<dbReference type="PIRSF" id="PIRSF000495">
    <property type="entry name" value="Amidotransf_hisH"/>
    <property type="match status" value="1"/>
</dbReference>
<dbReference type="SUPFAM" id="SSF52317">
    <property type="entry name" value="Class I glutamine amidotransferase-like"/>
    <property type="match status" value="1"/>
</dbReference>
<dbReference type="PROSITE" id="PS51273">
    <property type="entry name" value="GATASE_TYPE_1"/>
    <property type="match status" value="1"/>
</dbReference>
<evidence type="ECO:0000255" key="1">
    <source>
        <dbReference type="HAMAP-Rule" id="MF_00278"/>
    </source>
</evidence>
<gene>
    <name evidence="1" type="primary">hisH</name>
    <name type="ordered locus">BAA_1495</name>
</gene>
<protein>
    <recommendedName>
        <fullName evidence="1">Imidazole glycerol phosphate synthase subunit HisH</fullName>
        <ecNumber evidence="1">4.3.2.10</ecNumber>
    </recommendedName>
    <alternativeName>
        <fullName evidence="1">IGP synthase glutaminase subunit</fullName>
        <ecNumber evidence="1">3.5.1.2</ecNumber>
    </alternativeName>
    <alternativeName>
        <fullName evidence="1">IGP synthase subunit HisH</fullName>
    </alternativeName>
    <alternativeName>
        <fullName evidence="1">ImGP synthase subunit HisH</fullName>
        <shortName evidence="1">IGPS subunit HisH</shortName>
    </alternativeName>
</protein>
<comment type="function">
    <text evidence="1">IGPS catalyzes the conversion of PRFAR and glutamine to IGP, AICAR and glutamate. The HisH subunit catalyzes the hydrolysis of glutamine to glutamate and ammonia as part of the synthesis of IGP and AICAR. The resulting ammonia molecule is channeled to the active site of HisF.</text>
</comment>
<comment type="catalytic activity">
    <reaction evidence="1">
        <text>5-[(5-phospho-1-deoxy-D-ribulos-1-ylimino)methylamino]-1-(5-phospho-beta-D-ribosyl)imidazole-4-carboxamide + L-glutamine = D-erythro-1-(imidazol-4-yl)glycerol 3-phosphate + 5-amino-1-(5-phospho-beta-D-ribosyl)imidazole-4-carboxamide + L-glutamate + H(+)</text>
        <dbReference type="Rhea" id="RHEA:24793"/>
        <dbReference type="ChEBI" id="CHEBI:15378"/>
        <dbReference type="ChEBI" id="CHEBI:29985"/>
        <dbReference type="ChEBI" id="CHEBI:58278"/>
        <dbReference type="ChEBI" id="CHEBI:58359"/>
        <dbReference type="ChEBI" id="CHEBI:58475"/>
        <dbReference type="ChEBI" id="CHEBI:58525"/>
        <dbReference type="EC" id="4.3.2.10"/>
    </reaction>
</comment>
<comment type="catalytic activity">
    <reaction evidence="1">
        <text>L-glutamine + H2O = L-glutamate + NH4(+)</text>
        <dbReference type="Rhea" id="RHEA:15889"/>
        <dbReference type="ChEBI" id="CHEBI:15377"/>
        <dbReference type="ChEBI" id="CHEBI:28938"/>
        <dbReference type="ChEBI" id="CHEBI:29985"/>
        <dbReference type="ChEBI" id="CHEBI:58359"/>
        <dbReference type="EC" id="3.5.1.2"/>
    </reaction>
</comment>
<comment type="pathway">
    <text evidence="1">Amino-acid biosynthesis; L-histidine biosynthesis; L-histidine from 5-phospho-alpha-D-ribose 1-diphosphate: step 5/9.</text>
</comment>
<comment type="subunit">
    <text evidence="1">Heterodimer of HisH and HisF.</text>
</comment>
<comment type="subcellular location">
    <subcellularLocation>
        <location evidence="1">Cytoplasm</location>
    </subcellularLocation>
</comment>
<proteinExistence type="inferred from homology"/>
<keyword id="KW-0028">Amino-acid biosynthesis</keyword>
<keyword id="KW-0963">Cytoplasm</keyword>
<keyword id="KW-0315">Glutamine amidotransferase</keyword>
<keyword id="KW-0368">Histidine biosynthesis</keyword>
<keyword id="KW-0378">Hydrolase</keyword>
<keyword id="KW-0456">Lyase</keyword>
<organism>
    <name type="scientific">Bacillus anthracis (strain A0248)</name>
    <dbReference type="NCBI Taxonomy" id="592021"/>
    <lineage>
        <taxon>Bacteria</taxon>
        <taxon>Bacillati</taxon>
        <taxon>Bacillota</taxon>
        <taxon>Bacilli</taxon>
        <taxon>Bacillales</taxon>
        <taxon>Bacillaceae</taxon>
        <taxon>Bacillus</taxon>
        <taxon>Bacillus cereus group</taxon>
    </lineage>
</organism>
<name>HIS5_BACAA</name>
<accession>C3P504</accession>
<sequence length="209" mass="23286">MIAIIDYGMGNIRSVEQALKYIGAAYIVTSDKEEIFRSDGVILPGVGAFPKAMDILEEKDLVRVLQEIGRSRKPLLGICLGMQLLFEKSEELQDCNGLSLLPGVIRKLKVPYKIPHMGWNELKKEGEIALWNGVEDGSFVYYVHSYYADCPNEIVYGISDYGVKVPGFVAKGNIYGAQFHPEKSGDIGMQMLKNFKGVVETWKSSQLSI</sequence>